<organism>
    <name type="scientific">Pelagibacter ubique (strain HTCC1062)</name>
    <dbReference type="NCBI Taxonomy" id="335992"/>
    <lineage>
        <taxon>Bacteria</taxon>
        <taxon>Pseudomonadati</taxon>
        <taxon>Pseudomonadota</taxon>
        <taxon>Alphaproteobacteria</taxon>
        <taxon>Candidatus Pelagibacterales</taxon>
        <taxon>Candidatus Pelagibacteraceae</taxon>
        <taxon>Candidatus Pelagibacter</taxon>
    </lineage>
</organism>
<feature type="chain" id="PRO_0000227111" description="Glycine dehydrogenase (decarboxylating)">
    <location>
        <begin position="1"/>
        <end position="952"/>
    </location>
</feature>
<feature type="modified residue" description="N6-(pyridoxal phosphate)lysine" evidence="1">
    <location>
        <position position="696"/>
    </location>
</feature>
<keyword id="KW-0560">Oxidoreductase</keyword>
<keyword id="KW-0663">Pyridoxal phosphate</keyword>
<keyword id="KW-1185">Reference proteome</keyword>
<gene>
    <name evidence="1" type="primary">gcvP</name>
    <name type="ordered locus">SAR11_0668</name>
</gene>
<name>GCSP_PELUB</name>
<protein>
    <recommendedName>
        <fullName evidence="1">Glycine dehydrogenase (decarboxylating)</fullName>
        <ecNumber evidence="1">1.4.4.2</ecNumber>
    </recommendedName>
    <alternativeName>
        <fullName evidence="1">Glycine cleavage system P-protein</fullName>
    </alternativeName>
    <alternativeName>
        <fullName evidence="1">Glycine decarboxylase</fullName>
    </alternativeName>
    <alternativeName>
        <fullName evidence="1">Glycine dehydrogenase (aminomethyl-transferring)</fullName>
    </alternativeName>
</protein>
<comment type="function">
    <text evidence="1">The glycine cleavage system catalyzes the degradation of glycine. The P protein binds the alpha-amino group of glycine through its pyridoxal phosphate cofactor; CO(2) is released and the remaining methylamine moiety is then transferred to the lipoamide cofactor of the H protein.</text>
</comment>
<comment type="catalytic activity">
    <reaction evidence="1">
        <text>N(6)-[(R)-lipoyl]-L-lysyl-[glycine-cleavage complex H protein] + glycine + H(+) = N(6)-[(R)-S(8)-aminomethyldihydrolipoyl]-L-lysyl-[glycine-cleavage complex H protein] + CO2</text>
        <dbReference type="Rhea" id="RHEA:24304"/>
        <dbReference type="Rhea" id="RHEA-COMP:10494"/>
        <dbReference type="Rhea" id="RHEA-COMP:10495"/>
        <dbReference type="ChEBI" id="CHEBI:15378"/>
        <dbReference type="ChEBI" id="CHEBI:16526"/>
        <dbReference type="ChEBI" id="CHEBI:57305"/>
        <dbReference type="ChEBI" id="CHEBI:83099"/>
        <dbReference type="ChEBI" id="CHEBI:83143"/>
        <dbReference type="EC" id="1.4.4.2"/>
    </reaction>
</comment>
<comment type="cofactor">
    <cofactor evidence="1">
        <name>pyridoxal 5'-phosphate</name>
        <dbReference type="ChEBI" id="CHEBI:597326"/>
    </cofactor>
</comment>
<comment type="subunit">
    <text evidence="1">The glycine cleavage system is composed of four proteins: P, T, L and H.</text>
</comment>
<comment type="similarity">
    <text evidence="1">Belongs to the GcvP family.</text>
</comment>
<accession>Q4FMV1</accession>
<dbReference type="EC" id="1.4.4.2" evidence="1"/>
<dbReference type="EMBL" id="CP000084">
    <property type="protein sequence ID" value="AAZ21488.1"/>
    <property type="molecule type" value="Genomic_DNA"/>
</dbReference>
<dbReference type="RefSeq" id="WP_011281853.1">
    <property type="nucleotide sequence ID" value="NC_007205.1"/>
</dbReference>
<dbReference type="SMR" id="Q4FMV1"/>
<dbReference type="STRING" id="335992.SAR11_0668"/>
<dbReference type="GeneID" id="66295172"/>
<dbReference type="KEGG" id="pub:SAR11_0668"/>
<dbReference type="eggNOG" id="COG0403">
    <property type="taxonomic scope" value="Bacteria"/>
</dbReference>
<dbReference type="eggNOG" id="COG1003">
    <property type="taxonomic scope" value="Bacteria"/>
</dbReference>
<dbReference type="HOGENOM" id="CLU_004620_3_2_5"/>
<dbReference type="OrthoDB" id="9801272at2"/>
<dbReference type="Proteomes" id="UP000002528">
    <property type="component" value="Chromosome"/>
</dbReference>
<dbReference type="GO" id="GO:0005829">
    <property type="term" value="C:cytosol"/>
    <property type="evidence" value="ECO:0007669"/>
    <property type="project" value="TreeGrafter"/>
</dbReference>
<dbReference type="GO" id="GO:0005960">
    <property type="term" value="C:glycine cleavage complex"/>
    <property type="evidence" value="ECO:0007669"/>
    <property type="project" value="TreeGrafter"/>
</dbReference>
<dbReference type="GO" id="GO:0016594">
    <property type="term" value="F:glycine binding"/>
    <property type="evidence" value="ECO:0007669"/>
    <property type="project" value="TreeGrafter"/>
</dbReference>
<dbReference type="GO" id="GO:0004375">
    <property type="term" value="F:glycine dehydrogenase (decarboxylating) activity"/>
    <property type="evidence" value="ECO:0007669"/>
    <property type="project" value="UniProtKB-EC"/>
</dbReference>
<dbReference type="GO" id="GO:0030170">
    <property type="term" value="F:pyridoxal phosphate binding"/>
    <property type="evidence" value="ECO:0007669"/>
    <property type="project" value="TreeGrafter"/>
</dbReference>
<dbReference type="GO" id="GO:0019464">
    <property type="term" value="P:glycine decarboxylation via glycine cleavage system"/>
    <property type="evidence" value="ECO:0007669"/>
    <property type="project" value="UniProtKB-UniRule"/>
</dbReference>
<dbReference type="CDD" id="cd00613">
    <property type="entry name" value="GDC-P"/>
    <property type="match status" value="2"/>
</dbReference>
<dbReference type="FunFam" id="3.40.640.10:FF:000005">
    <property type="entry name" value="Glycine dehydrogenase (decarboxylating), mitochondrial"/>
    <property type="match status" value="1"/>
</dbReference>
<dbReference type="FunFam" id="3.90.1150.10:FF:000007">
    <property type="entry name" value="Glycine dehydrogenase (decarboxylating), mitochondrial"/>
    <property type="match status" value="1"/>
</dbReference>
<dbReference type="FunFam" id="3.40.640.10:FF:000007">
    <property type="entry name" value="glycine dehydrogenase (Decarboxylating), mitochondrial"/>
    <property type="match status" value="1"/>
</dbReference>
<dbReference type="Gene3D" id="3.90.1150.10">
    <property type="entry name" value="Aspartate Aminotransferase, domain 1"/>
    <property type="match status" value="2"/>
</dbReference>
<dbReference type="Gene3D" id="3.40.640.10">
    <property type="entry name" value="Type I PLP-dependent aspartate aminotransferase-like (Major domain)"/>
    <property type="match status" value="2"/>
</dbReference>
<dbReference type="HAMAP" id="MF_00711">
    <property type="entry name" value="GcvP"/>
    <property type="match status" value="1"/>
</dbReference>
<dbReference type="InterPro" id="IPR003437">
    <property type="entry name" value="GcvP"/>
</dbReference>
<dbReference type="InterPro" id="IPR049316">
    <property type="entry name" value="GDC-P_C"/>
</dbReference>
<dbReference type="InterPro" id="IPR049315">
    <property type="entry name" value="GDC-P_N"/>
</dbReference>
<dbReference type="InterPro" id="IPR020581">
    <property type="entry name" value="GDC_P"/>
</dbReference>
<dbReference type="InterPro" id="IPR015424">
    <property type="entry name" value="PyrdxlP-dep_Trfase"/>
</dbReference>
<dbReference type="InterPro" id="IPR015421">
    <property type="entry name" value="PyrdxlP-dep_Trfase_major"/>
</dbReference>
<dbReference type="InterPro" id="IPR015422">
    <property type="entry name" value="PyrdxlP-dep_Trfase_small"/>
</dbReference>
<dbReference type="NCBIfam" id="TIGR00461">
    <property type="entry name" value="gcvP"/>
    <property type="match status" value="1"/>
</dbReference>
<dbReference type="NCBIfam" id="NF001696">
    <property type="entry name" value="PRK00451.1"/>
    <property type="match status" value="1"/>
</dbReference>
<dbReference type="NCBIfam" id="NF003346">
    <property type="entry name" value="PRK04366.1"/>
    <property type="match status" value="1"/>
</dbReference>
<dbReference type="PANTHER" id="PTHR11773:SF1">
    <property type="entry name" value="GLYCINE DEHYDROGENASE (DECARBOXYLATING), MITOCHONDRIAL"/>
    <property type="match status" value="1"/>
</dbReference>
<dbReference type="PANTHER" id="PTHR11773">
    <property type="entry name" value="GLYCINE DEHYDROGENASE, DECARBOXYLATING"/>
    <property type="match status" value="1"/>
</dbReference>
<dbReference type="Pfam" id="PF21478">
    <property type="entry name" value="GcvP2_C"/>
    <property type="match status" value="1"/>
</dbReference>
<dbReference type="Pfam" id="PF02347">
    <property type="entry name" value="GDC-P"/>
    <property type="match status" value="2"/>
</dbReference>
<dbReference type="SUPFAM" id="SSF53383">
    <property type="entry name" value="PLP-dependent transferases"/>
    <property type="match status" value="2"/>
</dbReference>
<sequence>MLKNAQKDFIQRHIGPSVDEQNVMLKELGYQNLDDLIKDTVPEKILLKDDLDIGDPNSEYKALRKLKDISKKNKIYSSFIGMGYYGTYTPYVILRNILENPGWYTSYTPYQPEVAQGRLEMLLNFQQMIIDFTGMDIANASLLDEGTAAAEAMGLSYRISKSESKKVFVSKNCHPQTIDVIKTRAEPLGLEIIVGDEDKDIKEDIICGIIQYPGTLGDIKDPSEAISKIHKFNGKAVLACDLLALAKLKTPAELGADIAVGSSQRFGIPMGYGGPHAAFFATKDEYKRSMPGRIVGVSVDRHGKKAYRLALQTREQHIRRDKATSNICTAQALLAIVSAAYAVYHGPQGIKKIAESVSQLTKNFADKLKQSGYELYSNEFFDTVTIKTLDKTEKIYKNALDQGVNIRKVNSEMLAVSFDERKNLYRANQLLKIFNCSETIKETMNESLSNIPKNLLRTSTYLDHPVFNSYHSETEMLRYLKKLEDSDIALNKSMIALGSCTMKLNAVAEMIPVTWKEFSQPHPFSPVEQMDGYRELFTDLKNWLRSITGFSGVSLQPNAGAQGEFAGLMVIRKFHEKNGETNRNVCLIPSSAHGTNPASAQMVGMKVVVVKCDQYGNVDYEDLKNKAEEHSENLAALMVTYPSTHGVFEEKITDICELIHNHGGQVYMDGANLNALVGIAKPGNFGPDVCHINLHKTFCIPHGGGGPGMGPIACKKHLEIFLPKHSVIKDCGPVTGMGAVSAAPWGSSSILSISWMYIKMMGSEGLRKASQVAILNANYIAHKLKDSFPILYKGKSGNVAHECIIDIRTIKSETGITEEDIAKRLIDFGYHAPTMSWPVAGTMMIEPTESESLSEIDKFCSTLIKIKQEIDKIQSGEYDKTDNPLKNAPHTHVELTSNKWDHKYEREEAAYPSEFLRTNKYWPPVGRVDNVYGDKNLFCTCPSMEEYEDTAA</sequence>
<reference key="1">
    <citation type="journal article" date="2005" name="Science">
        <title>Genome streamlining in a cosmopolitan oceanic bacterium.</title>
        <authorList>
            <person name="Giovannoni S.J."/>
            <person name="Tripp H.J."/>
            <person name="Givan S."/>
            <person name="Podar M."/>
            <person name="Vergin K.L."/>
            <person name="Baptista D."/>
            <person name="Bibbs L."/>
            <person name="Eads J."/>
            <person name="Richardson T.H."/>
            <person name="Noordewier M."/>
            <person name="Rappe M.S."/>
            <person name="Short J.M."/>
            <person name="Carrington J.C."/>
            <person name="Mathur E.J."/>
        </authorList>
    </citation>
    <scope>NUCLEOTIDE SEQUENCE [LARGE SCALE GENOMIC DNA]</scope>
    <source>
        <strain>HTCC1062</strain>
    </source>
</reference>
<evidence type="ECO:0000255" key="1">
    <source>
        <dbReference type="HAMAP-Rule" id="MF_00711"/>
    </source>
</evidence>
<proteinExistence type="inferred from homology"/>